<protein>
    <recommendedName>
        <fullName>Cytochrome b</fullName>
    </recommendedName>
    <alternativeName>
        <fullName>Complex III subunit 3</fullName>
    </alternativeName>
    <alternativeName>
        <fullName>Complex III subunit III</fullName>
    </alternativeName>
    <alternativeName>
        <fullName>Cytochrome b-c1 complex subunit 3</fullName>
    </alternativeName>
    <alternativeName>
        <fullName>Ubiquinol-cytochrome-c reductase complex cytochrome b subunit</fullName>
    </alternativeName>
</protein>
<evidence type="ECO:0000250" key="1"/>
<evidence type="ECO:0000250" key="2">
    <source>
        <dbReference type="UniProtKB" id="P00157"/>
    </source>
</evidence>
<evidence type="ECO:0000255" key="3">
    <source>
        <dbReference type="PROSITE-ProRule" id="PRU00967"/>
    </source>
</evidence>
<evidence type="ECO:0000255" key="4">
    <source>
        <dbReference type="PROSITE-ProRule" id="PRU00968"/>
    </source>
</evidence>
<gene>
    <name type="primary">MT-CYB</name>
    <name type="synonym">COB</name>
    <name type="synonym">CYTB</name>
    <name type="synonym">MTCYB</name>
</gene>
<reference key="1">
    <citation type="submission" date="2000-08" db="EMBL/GenBank/DDBJ databases">
        <title>A cytochrome-b perspective on Passerina bunting relationships.</title>
        <authorList>
            <person name="Klicka J."/>
            <person name="Fry A.J."/>
            <person name="Zink R.M."/>
            <person name="Thompson C.W."/>
        </authorList>
    </citation>
    <scope>NUCLEOTIDE SEQUENCE [GENOMIC DNA]</scope>
    <source>
        <strain>Isolate BMNH jk94162</strain>
        <strain>Isolate BMNH X7250</strain>
    </source>
</reference>
<sequence length="380" mass="42449">MALNLRKNHQILKIINDALIDLPAPSNISTWWNFGSLLGLCLITQIITGLLLAMHYTADTNLAFSSVAHMCRDVQFGWLIRNLHANGASFFFICIYLHIGRGIYYGSYLNKETWNIGVILLLTLMATAFVGYVLPWGQMSFWGATVITNLFSAIPYIGQTLVEWAWGGFSVDNPTLTRFFALHFLLPFVIVGLTLVHLTFLHETGSNNPLGIPSDCDKIPFHPYYTIKDALGFVLMLSLLVSLALFSPNLLGDPENFTPANPLVTPPHIKPEWYFLFAYAILRSIPNKLGGVLALAASILVLFLMPLLHTSKLRSMTFRPLSQILFWTLVANVLILTWVGSQPVEHPFIIIGQLASFTYFAIILILFPLAAALENKLLKL</sequence>
<comment type="function">
    <text evidence="2">Component of the ubiquinol-cytochrome c reductase complex (complex III or cytochrome b-c1 complex) that is part of the mitochondrial respiratory chain. The b-c1 complex mediates electron transfer from ubiquinol to cytochrome c. Contributes to the generation of a proton gradient across the mitochondrial membrane that is then used for ATP synthesis.</text>
</comment>
<comment type="cofactor">
    <cofactor evidence="2">
        <name>heme b</name>
        <dbReference type="ChEBI" id="CHEBI:60344"/>
    </cofactor>
    <text evidence="2">Binds 2 heme b groups non-covalently.</text>
</comment>
<comment type="subunit">
    <text evidence="2">The cytochrome bc1 complex contains 11 subunits: 3 respiratory subunits (MT-CYB, CYC1 and UQCRFS1), 2 core proteins (UQCRC1 and UQCRC2) and 6 low-molecular weight proteins (UQCRH/QCR6, UQCRB/QCR7, UQCRQ/QCR8, UQCR10/QCR9, UQCR11/QCR10 and a cleavage product of UQCRFS1). This cytochrome bc1 complex then forms a dimer.</text>
</comment>
<comment type="subcellular location">
    <subcellularLocation>
        <location evidence="2">Mitochondrion inner membrane</location>
        <topology evidence="2">Multi-pass membrane protein</topology>
    </subcellularLocation>
</comment>
<comment type="miscellaneous">
    <text evidence="1">Heme 1 (or BL or b562) is low-potential and absorbs at about 562 nm, and heme 2 (or BH or b566) is high-potential and absorbs at about 566 nm.</text>
</comment>
<comment type="similarity">
    <text evidence="3 4">Belongs to the cytochrome b family.</text>
</comment>
<comment type="caution">
    <text evidence="2">The full-length protein contains only eight transmembrane helices, not nine as predicted by bioinformatics tools.</text>
</comment>
<dbReference type="EMBL" id="AF301446">
    <property type="protein sequence ID" value="AAK97243.1"/>
    <property type="molecule type" value="Genomic_DNA"/>
</dbReference>
<dbReference type="EMBL" id="AF301447">
    <property type="protein sequence ID" value="AAK97244.1"/>
    <property type="molecule type" value="Genomic_DNA"/>
</dbReference>
<dbReference type="SMR" id="Q94PA3"/>
<dbReference type="GO" id="GO:0005743">
    <property type="term" value="C:mitochondrial inner membrane"/>
    <property type="evidence" value="ECO:0007669"/>
    <property type="project" value="UniProtKB-SubCell"/>
</dbReference>
<dbReference type="GO" id="GO:0045275">
    <property type="term" value="C:respiratory chain complex III"/>
    <property type="evidence" value="ECO:0007669"/>
    <property type="project" value="InterPro"/>
</dbReference>
<dbReference type="GO" id="GO:0046872">
    <property type="term" value="F:metal ion binding"/>
    <property type="evidence" value="ECO:0007669"/>
    <property type="project" value="UniProtKB-KW"/>
</dbReference>
<dbReference type="GO" id="GO:0008121">
    <property type="term" value="F:ubiquinol-cytochrome-c reductase activity"/>
    <property type="evidence" value="ECO:0007669"/>
    <property type="project" value="InterPro"/>
</dbReference>
<dbReference type="GO" id="GO:0006122">
    <property type="term" value="P:mitochondrial electron transport, ubiquinol to cytochrome c"/>
    <property type="evidence" value="ECO:0007669"/>
    <property type="project" value="TreeGrafter"/>
</dbReference>
<dbReference type="CDD" id="cd00290">
    <property type="entry name" value="cytochrome_b_C"/>
    <property type="match status" value="1"/>
</dbReference>
<dbReference type="CDD" id="cd00284">
    <property type="entry name" value="Cytochrome_b_N"/>
    <property type="match status" value="1"/>
</dbReference>
<dbReference type="FunFam" id="1.20.810.10:FF:000002">
    <property type="entry name" value="Cytochrome b"/>
    <property type="match status" value="1"/>
</dbReference>
<dbReference type="Gene3D" id="1.20.810.10">
    <property type="entry name" value="Cytochrome Bc1 Complex, Chain C"/>
    <property type="match status" value="1"/>
</dbReference>
<dbReference type="InterPro" id="IPR005798">
    <property type="entry name" value="Cyt_b/b6_C"/>
</dbReference>
<dbReference type="InterPro" id="IPR036150">
    <property type="entry name" value="Cyt_b/b6_C_sf"/>
</dbReference>
<dbReference type="InterPro" id="IPR005797">
    <property type="entry name" value="Cyt_b/b6_N"/>
</dbReference>
<dbReference type="InterPro" id="IPR027387">
    <property type="entry name" value="Cytb/b6-like_sf"/>
</dbReference>
<dbReference type="InterPro" id="IPR030689">
    <property type="entry name" value="Cytochrome_b"/>
</dbReference>
<dbReference type="InterPro" id="IPR048260">
    <property type="entry name" value="Cytochrome_b_C_euk/bac"/>
</dbReference>
<dbReference type="InterPro" id="IPR048259">
    <property type="entry name" value="Cytochrome_b_N_euk/bac"/>
</dbReference>
<dbReference type="InterPro" id="IPR016174">
    <property type="entry name" value="Di-haem_cyt_TM"/>
</dbReference>
<dbReference type="PANTHER" id="PTHR19271">
    <property type="entry name" value="CYTOCHROME B"/>
    <property type="match status" value="1"/>
</dbReference>
<dbReference type="PANTHER" id="PTHR19271:SF16">
    <property type="entry name" value="CYTOCHROME B"/>
    <property type="match status" value="1"/>
</dbReference>
<dbReference type="Pfam" id="PF00032">
    <property type="entry name" value="Cytochrom_B_C"/>
    <property type="match status" value="1"/>
</dbReference>
<dbReference type="Pfam" id="PF00033">
    <property type="entry name" value="Cytochrome_B"/>
    <property type="match status" value="1"/>
</dbReference>
<dbReference type="PIRSF" id="PIRSF038885">
    <property type="entry name" value="COB"/>
    <property type="match status" value="1"/>
</dbReference>
<dbReference type="SUPFAM" id="SSF81648">
    <property type="entry name" value="a domain/subunit of cytochrome bc1 complex (Ubiquinol-cytochrome c reductase)"/>
    <property type="match status" value="1"/>
</dbReference>
<dbReference type="SUPFAM" id="SSF81342">
    <property type="entry name" value="Transmembrane di-heme cytochromes"/>
    <property type="match status" value="1"/>
</dbReference>
<dbReference type="PROSITE" id="PS51003">
    <property type="entry name" value="CYTB_CTER"/>
    <property type="match status" value="1"/>
</dbReference>
<dbReference type="PROSITE" id="PS51002">
    <property type="entry name" value="CYTB_NTER"/>
    <property type="match status" value="1"/>
</dbReference>
<keyword id="KW-0249">Electron transport</keyword>
<keyword id="KW-0349">Heme</keyword>
<keyword id="KW-0408">Iron</keyword>
<keyword id="KW-0472">Membrane</keyword>
<keyword id="KW-0479">Metal-binding</keyword>
<keyword id="KW-0496">Mitochondrion</keyword>
<keyword id="KW-0999">Mitochondrion inner membrane</keyword>
<keyword id="KW-0679">Respiratory chain</keyword>
<keyword id="KW-0812">Transmembrane</keyword>
<keyword id="KW-1133">Transmembrane helix</keyword>
<keyword id="KW-0813">Transport</keyword>
<keyword id="KW-0830">Ubiquinone</keyword>
<geneLocation type="mitochondrion"/>
<proteinExistence type="inferred from homology"/>
<organism>
    <name type="scientific">Passerina cyanea</name>
    <name type="common">Indigo bunting</name>
    <dbReference type="NCBI Taxonomy" id="84843"/>
    <lineage>
        <taxon>Eukaryota</taxon>
        <taxon>Metazoa</taxon>
        <taxon>Chordata</taxon>
        <taxon>Craniata</taxon>
        <taxon>Vertebrata</taxon>
        <taxon>Euteleostomi</taxon>
        <taxon>Archelosauria</taxon>
        <taxon>Archosauria</taxon>
        <taxon>Dinosauria</taxon>
        <taxon>Saurischia</taxon>
        <taxon>Theropoda</taxon>
        <taxon>Coelurosauria</taxon>
        <taxon>Aves</taxon>
        <taxon>Neognathae</taxon>
        <taxon>Neoaves</taxon>
        <taxon>Telluraves</taxon>
        <taxon>Australaves</taxon>
        <taxon>Passeriformes</taxon>
        <taxon>Cardinalidae</taxon>
        <taxon>Passerina</taxon>
    </lineage>
</organism>
<name>CYB_PASCY</name>
<feature type="chain" id="PRO_0000061359" description="Cytochrome b">
    <location>
        <begin position="1"/>
        <end position="380"/>
    </location>
</feature>
<feature type="transmembrane region" description="Helical" evidence="2">
    <location>
        <begin position="34"/>
        <end position="54"/>
    </location>
</feature>
<feature type="transmembrane region" description="Helical" evidence="2">
    <location>
        <begin position="78"/>
        <end position="99"/>
    </location>
</feature>
<feature type="transmembrane region" description="Helical" evidence="2">
    <location>
        <begin position="114"/>
        <end position="134"/>
    </location>
</feature>
<feature type="transmembrane region" description="Helical" evidence="2">
    <location>
        <begin position="179"/>
        <end position="199"/>
    </location>
</feature>
<feature type="transmembrane region" description="Helical" evidence="2">
    <location>
        <begin position="227"/>
        <end position="247"/>
    </location>
</feature>
<feature type="transmembrane region" description="Helical" evidence="2">
    <location>
        <begin position="289"/>
        <end position="309"/>
    </location>
</feature>
<feature type="transmembrane region" description="Helical" evidence="2">
    <location>
        <begin position="321"/>
        <end position="341"/>
    </location>
</feature>
<feature type="transmembrane region" description="Helical" evidence="2">
    <location>
        <begin position="348"/>
        <end position="368"/>
    </location>
</feature>
<feature type="binding site" description="axial binding residue" evidence="2">
    <location>
        <position position="84"/>
    </location>
    <ligand>
        <name>heme b</name>
        <dbReference type="ChEBI" id="CHEBI:60344"/>
        <label>b562</label>
    </ligand>
    <ligandPart>
        <name>Fe</name>
        <dbReference type="ChEBI" id="CHEBI:18248"/>
    </ligandPart>
</feature>
<feature type="binding site" description="axial binding residue" evidence="2">
    <location>
        <position position="98"/>
    </location>
    <ligand>
        <name>heme b</name>
        <dbReference type="ChEBI" id="CHEBI:60344"/>
        <label>b566</label>
    </ligand>
    <ligandPart>
        <name>Fe</name>
        <dbReference type="ChEBI" id="CHEBI:18248"/>
    </ligandPart>
</feature>
<feature type="binding site" description="axial binding residue" evidence="2">
    <location>
        <position position="183"/>
    </location>
    <ligand>
        <name>heme b</name>
        <dbReference type="ChEBI" id="CHEBI:60344"/>
        <label>b562</label>
    </ligand>
    <ligandPart>
        <name>Fe</name>
        <dbReference type="ChEBI" id="CHEBI:18248"/>
    </ligandPart>
</feature>
<feature type="binding site" description="axial binding residue" evidence="2">
    <location>
        <position position="197"/>
    </location>
    <ligand>
        <name>heme b</name>
        <dbReference type="ChEBI" id="CHEBI:60344"/>
        <label>b566</label>
    </ligand>
    <ligandPart>
        <name>Fe</name>
        <dbReference type="ChEBI" id="CHEBI:18248"/>
    </ligandPart>
</feature>
<feature type="binding site" evidence="2">
    <location>
        <position position="202"/>
    </location>
    <ligand>
        <name>a ubiquinone</name>
        <dbReference type="ChEBI" id="CHEBI:16389"/>
    </ligand>
</feature>
<accession>Q94PA3</accession>